<feature type="initiator methionine" description="Removed" evidence="6 8">
    <location>
        <position position="1"/>
    </location>
</feature>
<feature type="chain" id="PRO_0000307750" description="RNA-binding protein 42">
    <location>
        <begin position="2"/>
        <end position="480"/>
    </location>
</feature>
<feature type="domain" description="RRM" evidence="2">
    <location>
        <begin position="381"/>
        <end position="459"/>
    </location>
</feature>
<feature type="region of interest" description="Disordered" evidence="3">
    <location>
        <begin position="1"/>
        <end position="30"/>
    </location>
</feature>
<feature type="region of interest" description="Necessary for interaction with HNRNPK" evidence="1">
    <location>
        <begin position="236"/>
        <end position="480"/>
    </location>
</feature>
<feature type="region of interest" description="Disordered" evidence="3">
    <location>
        <begin position="319"/>
        <end position="356"/>
    </location>
</feature>
<feature type="compositionally biased region" description="Gly residues" evidence="3">
    <location>
        <begin position="11"/>
        <end position="27"/>
    </location>
</feature>
<feature type="compositionally biased region" description="Basic and acidic residues" evidence="3">
    <location>
        <begin position="345"/>
        <end position="356"/>
    </location>
</feature>
<feature type="modified residue" description="N-acetylalanine" evidence="6 8">
    <location>
        <position position="2"/>
    </location>
</feature>
<feature type="modified residue" description="Phosphoserine" evidence="7">
    <location>
        <position position="135"/>
    </location>
</feature>
<feature type="modified residue" description="Asymmetric dimethylarginine" evidence="9">
    <location>
        <position position="153"/>
    </location>
</feature>
<feature type="modified residue" description="Asymmetric dimethylarginine" evidence="9">
    <location>
        <position position="158"/>
    </location>
</feature>
<feature type="modified residue" description="Asymmetric dimethylarginine" evidence="9">
    <location>
        <position position="168"/>
    </location>
</feature>
<feature type="modified residue" description="Asymmetric dimethylarginine" evidence="9">
    <location>
        <position position="181"/>
    </location>
</feature>
<feature type="splice variant" id="VSP_037256" description="In isoform 4." evidence="5">
    <location>
        <begin position="147"/>
        <end position="180"/>
    </location>
</feature>
<feature type="splice variant" id="VSP_028817" description="In isoform 2." evidence="4">
    <location>
        <begin position="147"/>
        <end position="176"/>
    </location>
</feature>
<feature type="splice variant" id="VSP_028818" description="In isoform 3." evidence="4">
    <location>
        <begin position="147"/>
        <end position="175"/>
    </location>
</feature>
<feature type="turn" evidence="10">
    <location>
        <begin position="371"/>
        <end position="376"/>
    </location>
</feature>
<feature type="strand" evidence="10">
    <location>
        <begin position="381"/>
        <end position="387"/>
    </location>
</feature>
<feature type="strand" evidence="10">
    <location>
        <begin position="390"/>
        <end position="392"/>
    </location>
</feature>
<feature type="helix" evidence="10">
    <location>
        <begin position="396"/>
        <end position="403"/>
    </location>
</feature>
<feature type="strand" evidence="10">
    <location>
        <begin position="404"/>
        <end position="406"/>
    </location>
</feature>
<feature type="strand" evidence="10">
    <location>
        <begin position="409"/>
        <end position="414"/>
    </location>
</feature>
<feature type="turn" evidence="10">
    <location>
        <begin position="416"/>
        <end position="418"/>
    </location>
</feature>
<feature type="strand" evidence="10">
    <location>
        <begin position="419"/>
        <end position="430"/>
    </location>
</feature>
<feature type="helix" evidence="10">
    <location>
        <begin position="432"/>
        <end position="442"/>
    </location>
</feature>
<feature type="strand" evidence="10">
    <location>
        <begin position="453"/>
        <end position="456"/>
    </location>
</feature>
<feature type="helix" evidence="10">
    <location>
        <begin position="462"/>
        <end position="472"/>
    </location>
</feature>
<accession>Q9BTD8</accession>
<accession>O00320</accession>
<accession>Q8N5R7</accession>
<accession>Q9BU66</accession>
<keyword id="KW-0002">3D-structure</keyword>
<keyword id="KW-0007">Acetylation</keyword>
<keyword id="KW-0025">Alternative splicing</keyword>
<keyword id="KW-0963">Cytoplasm</keyword>
<keyword id="KW-0488">Methylation</keyword>
<keyword id="KW-0539">Nucleus</keyword>
<keyword id="KW-0597">Phosphoprotein</keyword>
<keyword id="KW-1267">Proteomics identification</keyword>
<keyword id="KW-1185">Reference proteome</keyword>
<keyword id="KW-0694">RNA-binding</keyword>
<protein>
    <recommendedName>
        <fullName>RNA-binding protein 42</fullName>
    </recommendedName>
    <alternativeName>
        <fullName>RNA-binding motif protein 42</fullName>
    </alternativeName>
</protein>
<evidence type="ECO:0000250" key="1"/>
<evidence type="ECO:0000255" key="2">
    <source>
        <dbReference type="PROSITE-ProRule" id="PRU00176"/>
    </source>
</evidence>
<evidence type="ECO:0000256" key="3">
    <source>
        <dbReference type="SAM" id="MobiDB-lite"/>
    </source>
</evidence>
<evidence type="ECO:0000303" key="4">
    <source>
    </source>
</evidence>
<evidence type="ECO:0000305" key="5"/>
<evidence type="ECO:0007744" key="6">
    <source>
    </source>
</evidence>
<evidence type="ECO:0007744" key="7">
    <source>
    </source>
</evidence>
<evidence type="ECO:0007744" key="8">
    <source>
    </source>
</evidence>
<evidence type="ECO:0007744" key="9">
    <source>
    </source>
</evidence>
<evidence type="ECO:0007829" key="10">
    <source>
        <dbReference type="PDB" id="8QP8"/>
    </source>
</evidence>
<gene>
    <name type="primary">RBM42</name>
</gene>
<dbReference type="EMBL" id="AC002115">
    <property type="protein sequence ID" value="AAB57629.1"/>
    <property type="status" value="ALT_SEQ"/>
    <property type="molecule type" value="Genomic_DNA"/>
</dbReference>
<dbReference type="EMBL" id="BC002868">
    <property type="protein sequence ID" value="AAH02868.1"/>
    <property type="molecule type" value="mRNA"/>
</dbReference>
<dbReference type="EMBL" id="BC004204">
    <property type="protein sequence ID" value="AAH04204.1"/>
    <property type="molecule type" value="mRNA"/>
</dbReference>
<dbReference type="EMBL" id="BC031682">
    <property type="protein sequence ID" value="AAH31682.1"/>
    <property type="molecule type" value="mRNA"/>
</dbReference>
<dbReference type="CCDS" id="CCDS12468.1">
    <molecule id="Q9BTD8-1"/>
</dbReference>
<dbReference type="RefSeq" id="NP_001306042.1">
    <molecule id="Q9BTD8-3"/>
    <property type="nucleotide sequence ID" value="NM_001319113.2"/>
</dbReference>
<dbReference type="RefSeq" id="NP_077297.2">
    <molecule id="Q9BTD8-1"/>
    <property type="nucleotide sequence ID" value="NM_024321.4"/>
</dbReference>
<dbReference type="PDB" id="6QW6">
    <property type="method" value="EM"/>
    <property type="resolution" value="2.92 A"/>
    <property type="chains" value="R=1-480"/>
</dbReference>
<dbReference type="PDB" id="6QX9">
    <property type="method" value="EM"/>
    <property type="resolution" value="3.28 A"/>
    <property type="chains" value="R=1-480"/>
</dbReference>
<dbReference type="PDB" id="8H6E">
    <property type="method" value="EM"/>
    <property type="resolution" value="3.20 A"/>
    <property type="chains" value="4R=1-480"/>
</dbReference>
<dbReference type="PDB" id="8H6J">
    <property type="method" value="EM"/>
    <property type="resolution" value="3.25 A"/>
    <property type="chains" value="4R=1-480"/>
</dbReference>
<dbReference type="PDB" id="8QP8">
    <property type="method" value="EM"/>
    <property type="resolution" value="3.50 A"/>
    <property type="chains" value="R=1-480"/>
</dbReference>
<dbReference type="PDB" id="8QP9">
    <property type="method" value="EM"/>
    <property type="resolution" value="4.10 A"/>
    <property type="chains" value="R=1-480"/>
</dbReference>
<dbReference type="PDB" id="8QPK">
    <property type="method" value="EM"/>
    <property type="resolution" value="4.20 A"/>
    <property type="chains" value="R=1-480"/>
</dbReference>
<dbReference type="PDB" id="8QXD">
    <property type="method" value="EM"/>
    <property type="resolution" value="9.60 A"/>
    <property type="chains" value="R=1-480"/>
</dbReference>
<dbReference type="PDB" id="8R08">
    <property type="method" value="EM"/>
    <property type="resolution" value="6.10 A"/>
    <property type="chains" value="R=1-480"/>
</dbReference>
<dbReference type="PDB" id="8R0A">
    <property type="method" value="EM"/>
    <property type="resolution" value="5.80 A"/>
    <property type="chains" value="R=1-480"/>
</dbReference>
<dbReference type="PDBsum" id="6QW6"/>
<dbReference type="PDBsum" id="6QX9"/>
<dbReference type="PDBsum" id="8H6E"/>
<dbReference type="PDBsum" id="8H6J"/>
<dbReference type="PDBsum" id="8QP8"/>
<dbReference type="PDBsum" id="8QP9"/>
<dbReference type="PDBsum" id="8QPK"/>
<dbReference type="PDBsum" id="8QXD"/>
<dbReference type="PDBsum" id="8R08"/>
<dbReference type="PDBsum" id="8R0A"/>
<dbReference type="EMDB" id="EMD-18544"/>
<dbReference type="EMDB" id="EMD-18545"/>
<dbReference type="EMDB" id="EMD-18555"/>
<dbReference type="EMDB" id="EMD-18718"/>
<dbReference type="EMDB" id="EMD-18786"/>
<dbReference type="EMDB" id="EMD-18788"/>
<dbReference type="EMDB" id="EMD-34500"/>
<dbReference type="EMDB" id="EMD-34505"/>
<dbReference type="EMDB" id="EMD-4658"/>
<dbReference type="EMDB" id="EMD-4665"/>
<dbReference type="SMR" id="Q9BTD8"/>
<dbReference type="BioGRID" id="122588">
    <property type="interactions" value="377"/>
</dbReference>
<dbReference type="ComplexPortal" id="CPX-2391">
    <property type="entry name" value="U4/U6.U5 small nuclear ribonucleoprotein complex"/>
</dbReference>
<dbReference type="CORUM" id="Q9BTD8"/>
<dbReference type="FunCoup" id="Q9BTD8">
    <property type="interactions" value="2806"/>
</dbReference>
<dbReference type="IntAct" id="Q9BTD8">
    <property type="interactions" value="288"/>
</dbReference>
<dbReference type="MINT" id="Q9BTD8"/>
<dbReference type="STRING" id="9606.ENSP00000262633"/>
<dbReference type="GlyGen" id="Q9BTD8">
    <property type="glycosylation" value="1 site, 1 O-linked glycan (1 site)"/>
</dbReference>
<dbReference type="iPTMnet" id="Q9BTD8"/>
<dbReference type="PhosphoSitePlus" id="Q9BTD8"/>
<dbReference type="BioMuta" id="RBM42"/>
<dbReference type="DMDM" id="74761247"/>
<dbReference type="jPOST" id="Q9BTD8"/>
<dbReference type="MassIVE" id="Q9BTD8"/>
<dbReference type="PaxDb" id="9606-ENSP00000262633"/>
<dbReference type="PeptideAtlas" id="Q9BTD8"/>
<dbReference type="ProteomicsDB" id="78975">
    <molecule id="Q9BTD8-1"/>
</dbReference>
<dbReference type="ProteomicsDB" id="78976">
    <molecule id="Q9BTD8-2"/>
</dbReference>
<dbReference type="ProteomicsDB" id="78977">
    <molecule id="Q9BTD8-3"/>
</dbReference>
<dbReference type="ProteomicsDB" id="78978">
    <molecule id="Q9BTD8-4"/>
</dbReference>
<dbReference type="Pumba" id="Q9BTD8"/>
<dbReference type="TopDownProteomics" id="Q9BTD8-2">
    <molecule id="Q9BTD8-2"/>
</dbReference>
<dbReference type="Antibodypedia" id="29473">
    <property type="antibodies" value="138 antibodies from 22 providers"/>
</dbReference>
<dbReference type="DNASU" id="79171"/>
<dbReference type="Ensembl" id="ENST00000262633.9">
    <molecule id="Q9BTD8-1"/>
    <property type="protein sequence ID" value="ENSP00000262633.3"/>
    <property type="gene ID" value="ENSG00000126254.12"/>
</dbReference>
<dbReference type="Ensembl" id="ENST00000588161.5">
    <molecule id="Q9BTD8-2"/>
    <property type="protein sequence ID" value="ENSP00000466044.1"/>
    <property type="gene ID" value="ENSG00000126254.12"/>
</dbReference>
<dbReference type="GeneID" id="79171"/>
<dbReference type="KEGG" id="hsa:79171"/>
<dbReference type="MANE-Select" id="ENST00000262633.9">
    <property type="protein sequence ID" value="ENSP00000262633.3"/>
    <property type="RefSeq nucleotide sequence ID" value="NM_024321.5"/>
    <property type="RefSeq protein sequence ID" value="NP_077297.2"/>
</dbReference>
<dbReference type="UCSC" id="uc002oan.4">
    <molecule id="Q9BTD8-1"/>
    <property type="organism name" value="human"/>
</dbReference>
<dbReference type="AGR" id="HGNC:28117"/>
<dbReference type="CTD" id="79171"/>
<dbReference type="DisGeNET" id="79171"/>
<dbReference type="GeneCards" id="RBM42"/>
<dbReference type="HGNC" id="HGNC:28117">
    <property type="gene designation" value="RBM42"/>
</dbReference>
<dbReference type="HPA" id="ENSG00000126254">
    <property type="expression patterns" value="Low tissue specificity"/>
</dbReference>
<dbReference type="MIM" id="613232">
    <property type="type" value="gene"/>
</dbReference>
<dbReference type="neXtProt" id="NX_Q9BTD8"/>
<dbReference type="OpenTargets" id="ENSG00000126254"/>
<dbReference type="PharmGKB" id="PA162400760"/>
<dbReference type="VEuPathDB" id="HostDB:ENSG00000126254"/>
<dbReference type="eggNOG" id="KOG0226">
    <property type="taxonomic scope" value="Eukaryota"/>
</dbReference>
<dbReference type="GeneTree" id="ENSGT00930000151055"/>
<dbReference type="InParanoid" id="Q9BTD8"/>
<dbReference type="OMA" id="QRMPMMR"/>
<dbReference type="OrthoDB" id="1749473at2759"/>
<dbReference type="PAN-GO" id="Q9BTD8">
    <property type="GO annotations" value="2 GO annotations based on evolutionary models"/>
</dbReference>
<dbReference type="PhylomeDB" id="Q9BTD8"/>
<dbReference type="TreeFam" id="TF313946"/>
<dbReference type="PathwayCommons" id="Q9BTD8"/>
<dbReference type="Reactome" id="R-HSA-72163">
    <property type="pathway name" value="mRNA Splicing - Major Pathway"/>
</dbReference>
<dbReference type="SignaLink" id="Q9BTD8"/>
<dbReference type="SIGNOR" id="Q9BTD8"/>
<dbReference type="BioGRID-ORCS" id="79171">
    <property type="hits" value="570 hits in 1167 CRISPR screens"/>
</dbReference>
<dbReference type="CD-CODE" id="DEE660B4">
    <property type="entry name" value="Stress granule"/>
</dbReference>
<dbReference type="ChiTaRS" id="RBM42">
    <property type="organism name" value="human"/>
</dbReference>
<dbReference type="GenomeRNAi" id="79171"/>
<dbReference type="Pharos" id="Q9BTD8">
    <property type="development level" value="Tdark"/>
</dbReference>
<dbReference type="PRO" id="PR:Q9BTD8"/>
<dbReference type="Proteomes" id="UP000005640">
    <property type="component" value="Chromosome 19"/>
</dbReference>
<dbReference type="RNAct" id="Q9BTD8">
    <property type="molecule type" value="protein"/>
</dbReference>
<dbReference type="Bgee" id="ENSG00000126254">
    <property type="expression patterns" value="Expressed in mucosa of transverse colon and 200 other cell types or tissues"/>
</dbReference>
<dbReference type="ExpressionAtlas" id="Q9BTD8">
    <property type="expression patterns" value="baseline and differential"/>
</dbReference>
<dbReference type="GO" id="GO:0005737">
    <property type="term" value="C:cytoplasm"/>
    <property type="evidence" value="ECO:0007669"/>
    <property type="project" value="UniProtKB-SubCell"/>
</dbReference>
<dbReference type="GO" id="GO:0005654">
    <property type="term" value="C:nucleoplasm"/>
    <property type="evidence" value="ECO:0000304"/>
    <property type="project" value="Reactome"/>
</dbReference>
<dbReference type="GO" id="GO:0005634">
    <property type="term" value="C:nucleus"/>
    <property type="evidence" value="ECO:0000303"/>
    <property type="project" value="ComplexPortal"/>
</dbReference>
<dbReference type="GO" id="GO:0046540">
    <property type="term" value="C:U4/U6 x U5 tri-snRNP complex"/>
    <property type="evidence" value="ECO:0000353"/>
    <property type="project" value="ComplexPortal"/>
</dbReference>
<dbReference type="GO" id="GO:0003729">
    <property type="term" value="F:mRNA binding"/>
    <property type="evidence" value="ECO:0000318"/>
    <property type="project" value="GO_Central"/>
</dbReference>
<dbReference type="GO" id="GO:0003723">
    <property type="term" value="F:RNA binding"/>
    <property type="evidence" value="ECO:0007005"/>
    <property type="project" value="UniProtKB"/>
</dbReference>
<dbReference type="GO" id="GO:0000398">
    <property type="term" value="P:mRNA splicing, via spliceosome"/>
    <property type="evidence" value="ECO:0000303"/>
    <property type="project" value="ComplexPortal"/>
</dbReference>
<dbReference type="GO" id="GO:0048025">
    <property type="term" value="P:negative regulation of mRNA splicing, via spliceosome"/>
    <property type="evidence" value="ECO:0007669"/>
    <property type="project" value="Ensembl"/>
</dbReference>
<dbReference type="CDD" id="cd12383">
    <property type="entry name" value="RRM_RBM42"/>
    <property type="match status" value="1"/>
</dbReference>
<dbReference type="FunFam" id="3.30.70.330:FF:000189">
    <property type="entry name" value="RNA-binding protein 42 isoform X2"/>
    <property type="match status" value="1"/>
</dbReference>
<dbReference type="Gene3D" id="3.30.70.330">
    <property type="match status" value="1"/>
</dbReference>
<dbReference type="InterPro" id="IPR012677">
    <property type="entry name" value="Nucleotide-bd_a/b_plait_sf"/>
</dbReference>
<dbReference type="InterPro" id="IPR035979">
    <property type="entry name" value="RBD_domain_sf"/>
</dbReference>
<dbReference type="InterPro" id="IPR050825">
    <property type="entry name" value="RBM42_RBP45_47-like"/>
</dbReference>
<dbReference type="InterPro" id="IPR034215">
    <property type="entry name" value="RBM42_RRM"/>
</dbReference>
<dbReference type="InterPro" id="IPR000504">
    <property type="entry name" value="RRM_dom"/>
</dbReference>
<dbReference type="PANTHER" id="PTHR47640:SF11">
    <property type="entry name" value="RNA-BINDING PROTEIN 42"/>
    <property type="match status" value="1"/>
</dbReference>
<dbReference type="PANTHER" id="PTHR47640">
    <property type="entry name" value="TRNA SELENOCYSTEINE 1-ASSOCIATED PROTEIN 1-RELATED-RELATED"/>
    <property type="match status" value="1"/>
</dbReference>
<dbReference type="Pfam" id="PF00076">
    <property type="entry name" value="RRM_1"/>
    <property type="match status" value="1"/>
</dbReference>
<dbReference type="SMART" id="SM00360">
    <property type="entry name" value="RRM"/>
    <property type="match status" value="1"/>
</dbReference>
<dbReference type="SUPFAM" id="SSF54928">
    <property type="entry name" value="RNA-binding domain, RBD"/>
    <property type="match status" value="1"/>
</dbReference>
<dbReference type="PROSITE" id="PS50102">
    <property type="entry name" value="RRM"/>
    <property type="match status" value="1"/>
</dbReference>
<proteinExistence type="evidence at protein level"/>
<reference key="1">
    <citation type="journal article" date="2004" name="Nature">
        <title>The DNA sequence and biology of human chromosome 19.</title>
        <authorList>
            <person name="Grimwood J."/>
            <person name="Gordon L.A."/>
            <person name="Olsen A.S."/>
            <person name="Terry A."/>
            <person name="Schmutz J."/>
            <person name="Lamerdin J.E."/>
            <person name="Hellsten U."/>
            <person name="Goodstein D."/>
            <person name="Couronne O."/>
            <person name="Tran-Gyamfi M."/>
            <person name="Aerts A."/>
            <person name="Altherr M."/>
            <person name="Ashworth L."/>
            <person name="Bajorek E."/>
            <person name="Black S."/>
            <person name="Branscomb E."/>
            <person name="Caenepeel S."/>
            <person name="Carrano A.V."/>
            <person name="Caoile C."/>
            <person name="Chan Y.M."/>
            <person name="Christensen M."/>
            <person name="Cleland C.A."/>
            <person name="Copeland A."/>
            <person name="Dalin E."/>
            <person name="Dehal P."/>
            <person name="Denys M."/>
            <person name="Detter J.C."/>
            <person name="Escobar J."/>
            <person name="Flowers D."/>
            <person name="Fotopulos D."/>
            <person name="Garcia C."/>
            <person name="Georgescu A.M."/>
            <person name="Glavina T."/>
            <person name="Gomez M."/>
            <person name="Gonzales E."/>
            <person name="Groza M."/>
            <person name="Hammon N."/>
            <person name="Hawkins T."/>
            <person name="Haydu L."/>
            <person name="Ho I."/>
            <person name="Huang W."/>
            <person name="Israni S."/>
            <person name="Jett J."/>
            <person name="Kadner K."/>
            <person name="Kimball H."/>
            <person name="Kobayashi A."/>
            <person name="Larionov V."/>
            <person name="Leem S.-H."/>
            <person name="Lopez F."/>
            <person name="Lou Y."/>
            <person name="Lowry S."/>
            <person name="Malfatti S."/>
            <person name="Martinez D."/>
            <person name="McCready P.M."/>
            <person name="Medina C."/>
            <person name="Morgan J."/>
            <person name="Nelson K."/>
            <person name="Nolan M."/>
            <person name="Ovcharenko I."/>
            <person name="Pitluck S."/>
            <person name="Pollard M."/>
            <person name="Popkie A.P."/>
            <person name="Predki P."/>
            <person name="Quan G."/>
            <person name="Ramirez L."/>
            <person name="Rash S."/>
            <person name="Retterer J."/>
            <person name="Rodriguez A."/>
            <person name="Rogers S."/>
            <person name="Salamov A."/>
            <person name="Salazar A."/>
            <person name="She X."/>
            <person name="Smith D."/>
            <person name="Slezak T."/>
            <person name="Solovyev V."/>
            <person name="Thayer N."/>
            <person name="Tice H."/>
            <person name="Tsai M."/>
            <person name="Ustaszewska A."/>
            <person name="Vo N."/>
            <person name="Wagner M."/>
            <person name="Wheeler J."/>
            <person name="Wu K."/>
            <person name="Xie G."/>
            <person name="Yang J."/>
            <person name="Dubchak I."/>
            <person name="Furey T.S."/>
            <person name="DeJong P."/>
            <person name="Dickson M."/>
            <person name="Gordon D."/>
            <person name="Eichler E.E."/>
            <person name="Pennacchio L.A."/>
            <person name="Richardson P."/>
            <person name="Stubbs L."/>
            <person name="Rokhsar D.S."/>
            <person name="Myers R.M."/>
            <person name="Rubin E.M."/>
            <person name="Lucas S.M."/>
        </authorList>
    </citation>
    <scope>NUCLEOTIDE SEQUENCE [LARGE SCALE GENOMIC DNA]</scope>
</reference>
<reference key="2">
    <citation type="journal article" date="2004" name="Genome Res.">
        <title>The status, quality, and expansion of the NIH full-length cDNA project: the Mammalian Gene Collection (MGC).</title>
        <authorList>
            <consortium name="The MGC Project Team"/>
        </authorList>
    </citation>
    <scope>NUCLEOTIDE SEQUENCE [LARGE SCALE MRNA] (ISOFORMS 1; 2 AND 3)</scope>
    <source>
        <tissue>Brain</tissue>
        <tissue>Lung</tissue>
        <tissue>Muscle</tissue>
    </source>
</reference>
<reference key="3">
    <citation type="journal article" date="2009" name="Anal. Chem.">
        <title>Lys-N and trypsin cover complementary parts of the phosphoproteome in a refined SCX-based approach.</title>
        <authorList>
            <person name="Gauci S."/>
            <person name="Helbig A.O."/>
            <person name="Slijper M."/>
            <person name="Krijgsveld J."/>
            <person name="Heck A.J."/>
            <person name="Mohammed S."/>
        </authorList>
    </citation>
    <scope>ACETYLATION [LARGE SCALE ANALYSIS] AT ALA-2</scope>
    <scope>CLEAVAGE OF INITIATOR METHIONINE [LARGE SCALE ANALYSIS]</scope>
    <scope>IDENTIFICATION BY MASS SPECTROMETRY [LARGE SCALE ANALYSIS]</scope>
</reference>
<reference key="4">
    <citation type="journal article" date="2009" name="Genes Cells">
        <title>hnRNP K interacts with RNA binding motif protein 42 and functions in the maintenance of cellular ATP level during stress conditions.</title>
        <authorList>
            <person name="Fukuda T."/>
            <person name="Naiki T."/>
            <person name="Saito M."/>
            <person name="Irie K."/>
        </authorList>
    </citation>
    <scope>ALTERNATIVE SPLICING (ISOFORMS 1 AND 4)</scope>
</reference>
<reference key="5">
    <citation type="journal article" date="2010" name="Sci. Signal.">
        <title>Quantitative phosphoproteomics reveals widespread full phosphorylation site occupancy during mitosis.</title>
        <authorList>
            <person name="Olsen J.V."/>
            <person name="Vermeulen M."/>
            <person name="Santamaria A."/>
            <person name="Kumar C."/>
            <person name="Miller M.L."/>
            <person name="Jensen L.J."/>
            <person name="Gnad F."/>
            <person name="Cox J."/>
            <person name="Jensen T.S."/>
            <person name="Nigg E.A."/>
            <person name="Brunak S."/>
            <person name="Mann M."/>
        </authorList>
    </citation>
    <scope>PHOSPHORYLATION [LARGE SCALE ANALYSIS] AT SER-135</scope>
    <scope>IDENTIFICATION BY MASS SPECTROMETRY [LARGE SCALE ANALYSIS]</scope>
    <source>
        <tissue>Cervix carcinoma</tissue>
    </source>
</reference>
<reference key="6">
    <citation type="journal article" date="2012" name="Proc. Natl. Acad. Sci. U.S.A.">
        <title>N-terminal acetylome analyses and functional insights of the N-terminal acetyltransferase NatB.</title>
        <authorList>
            <person name="Van Damme P."/>
            <person name="Lasa M."/>
            <person name="Polevoda B."/>
            <person name="Gazquez C."/>
            <person name="Elosegui-Artola A."/>
            <person name="Kim D.S."/>
            <person name="De Juan-Pardo E."/>
            <person name="Demeyer K."/>
            <person name="Hole K."/>
            <person name="Larrea E."/>
            <person name="Timmerman E."/>
            <person name="Prieto J."/>
            <person name="Arnesen T."/>
            <person name="Sherman F."/>
            <person name="Gevaert K."/>
            <person name="Aldabe R."/>
        </authorList>
    </citation>
    <scope>ACETYLATION [LARGE SCALE ANALYSIS] AT ALA-2</scope>
    <scope>CLEAVAGE OF INITIATOR METHIONINE [LARGE SCALE ANALYSIS]</scope>
    <scope>IDENTIFICATION BY MASS SPECTROMETRY [LARGE SCALE ANALYSIS]</scope>
</reference>
<reference key="7">
    <citation type="journal article" date="2014" name="Mol. Cell. Proteomics">
        <title>Immunoaffinity enrichment and mass spectrometry analysis of protein methylation.</title>
        <authorList>
            <person name="Guo A."/>
            <person name="Gu H."/>
            <person name="Zhou J."/>
            <person name="Mulhern D."/>
            <person name="Wang Y."/>
            <person name="Lee K.A."/>
            <person name="Yang V."/>
            <person name="Aguiar M."/>
            <person name="Kornhauser J."/>
            <person name="Jia X."/>
            <person name="Ren J."/>
            <person name="Beausoleil S.A."/>
            <person name="Silva J.C."/>
            <person name="Vemulapalli V."/>
            <person name="Bedford M.T."/>
            <person name="Comb M.J."/>
        </authorList>
    </citation>
    <scope>METHYLATION [LARGE SCALE ANALYSIS] AT ARG-153; ARG-158; ARG-168 AND ARG-181</scope>
    <scope>IDENTIFICATION BY MASS SPECTROMETRY [LARGE SCALE ANALYSIS]</scope>
    <source>
        <tissue>Colon carcinoma</tissue>
    </source>
</reference>
<organism>
    <name type="scientific">Homo sapiens</name>
    <name type="common">Human</name>
    <dbReference type="NCBI Taxonomy" id="9606"/>
    <lineage>
        <taxon>Eukaryota</taxon>
        <taxon>Metazoa</taxon>
        <taxon>Chordata</taxon>
        <taxon>Craniata</taxon>
        <taxon>Vertebrata</taxon>
        <taxon>Euteleostomi</taxon>
        <taxon>Mammalia</taxon>
        <taxon>Eutheria</taxon>
        <taxon>Euarchontoglires</taxon>
        <taxon>Primates</taxon>
        <taxon>Haplorrhini</taxon>
        <taxon>Catarrhini</taxon>
        <taxon>Hominidae</taxon>
        <taxon>Homo</taxon>
    </lineage>
</organism>
<name>RBM42_HUMAN</name>
<sequence>MAGAGPAPGLPGAGGPVVPGPGAGIPGKSGEERLKEMEAEMALFEQEVLGAPVPGIPTAVPAVPTVPTVPTVEAMQVPAAPVIRPIIATNTYQQVQQTLEARAAAAATVVPPMVGGPPFVGPVGFGPGDRSHLDSPEAREAMFLRRAAVAPQRAPILRPAFVPHVLQRADSALSSAAAGPRPMALRPPHQALVGPPLPGPPGPPMMLPPMARAPGPPLGSMAALRPPLEEPAAPRELGLGLGLGLKEKEEAVVAAAAGLEEASAAVAVGAGGAPAGPAVIGPSLPLALAMPLPEPEPLPLPLEVVRGLLPPLRIPELLSLRPRPRPPRPEPPPGLMALEVPEPLGEDKKKGKPEKLKRCIRTAAGSSWEDPSLLEWDADDFRIFCGDLGNEVNDDILARAFSRFPSFLKAKVIRDKRTGKTKGYGFVSFKDPSDYVRAMREMNGKYVGSRPIKLRKSMWKDRNLDVVRKKQKEKKKLGLR</sequence>
<comment type="function">
    <text evidence="1">Binds (via the RRM domain) to the 3'-untranslated region (UTR) of CDKN1A mRNA.</text>
</comment>
<comment type="subunit">
    <text evidence="1">Interacts with HNRNPK.</text>
</comment>
<comment type="interaction">
    <interactant intactId="EBI-746862">
        <id>Q9BTD8</id>
    </interactant>
    <interactant intactId="EBI-304185">
        <id>P61978</id>
        <label>HNRNPK</label>
    </interactant>
    <organismsDiffer>false</organismsDiffer>
    <experiments>4</experiments>
</comment>
<comment type="interaction">
    <interactant intactId="EBI-746862">
        <id>Q9BTD8</id>
    </interactant>
    <interactant intactId="EBI-12754095">
        <id>P86480</id>
        <label>PRR20D</label>
    </interactant>
    <organismsDiffer>false</organismsDiffer>
    <experiments>3</experiments>
</comment>
<comment type="interaction">
    <interactant intactId="EBI-746862">
        <id>Q9BTD8</id>
    </interactant>
    <interactant intactId="EBI-348380">
        <id>P25788</id>
        <label>PSMA3</label>
    </interactant>
    <organismsDiffer>false</organismsDiffer>
    <experiments>4</experiments>
</comment>
<comment type="interaction">
    <interactant intactId="EBI-746862">
        <id>Q9BTD8</id>
    </interactant>
    <interactant intactId="EBI-11987469">
        <id>Q6ZRY4</id>
        <label>RBPMS2</label>
    </interactant>
    <organismsDiffer>false</organismsDiffer>
    <experiments>3</experiments>
</comment>
<comment type="subcellular location">
    <subcellularLocation>
        <location evidence="1">Nucleus</location>
    </subcellularLocation>
    <subcellularLocation>
        <location evidence="1">Cytoplasm</location>
    </subcellularLocation>
    <text evidence="1">Upon stress response, localizes with HNRNPK in cytoplasmic aggregates of stalled translational preinitiation complexes called stress granules.</text>
</comment>
<comment type="alternative products">
    <event type="alternative splicing"/>
    <isoform>
        <id>Q9BTD8-1</id>
        <name>1</name>
        <sequence type="displayed"/>
    </isoform>
    <isoform>
        <id>Q9BTD8-2</id>
        <name>2</name>
        <name>RBM42a</name>
        <sequence type="described" ref="VSP_028817"/>
    </isoform>
    <isoform>
        <id>Q9BTD8-3</id>
        <name>3</name>
        <sequence type="described" ref="VSP_028818"/>
    </isoform>
    <isoform>
        <id>Q9BTD8-4</id>
        <name>4</name>
        <name>RBM42b</name>
        <sequence type="described" ref="VSP_037256"/>
    </isoform>
</comment>
<comment type="similarity">
    <text evidence="5">Belongs to the RRM RBM42 family.</text>
</comment>
<comment type="sequence caution" evidence="5">
    <conflict type="erroneous gene model prediction">
        <sequence resource="EMBL-CDS" id="AAB57629"/>
    </conflict>
</comment>